<dbReference type="EMBL" id="BC045490">
    <property type="protein sequence ID" value="AAH45490.1"/>
    <property type="molecule type" value="mRNA"/>
</dbReference>
<dbReference type="RefSeq" id="NP_956477.1">
    <property type="nucleotide sequence ID" value="NM_200183.1"/>
</dbReference>
<dbReference type="FunCoup" id="Q7ZVM1">
    <property type="interactions" value="1915"/>
</dbReference>
<dbReference type="STRING" id="7955.ENSDARP00000131386"/>
<dbReference type="PaxDb" id="7955-ENSDARP00000008133"/>
<dbReference type="GeneID" id="393152"/>
<dbReference type="KEGG" id="dre:393152"/>
<dbReference type="AGR" id="ZFIN:ZDB-GENE-040426-838"/>
<dbReference type="CTD" id="9897"/>
<dbReference type="ZFIN" id="ZDB-GENE-040426-838">
    <property type="gene designation" value="washc5"/>
</dbReference>
<dbReference type="eggNOG" id="KOG3666">
    <property type="taxonomic scope" value="Eukaryota"/>
</dbReference>
<dbReference type="InParanoid" id="Q7ZVM1"/>
<dbReference type="OrthoDB" id="565118at2759"/>
<dbReference type="PhylomeDB" id="Q7ZVM1"/>
<dbReference type="PRO" id="PR:Q7ZVM1"/>
<dbReference type="Proteomes" id="UP000000437">
    <property type="component" value="Chromosome 16"/>
</dbReference>
<dbReference type="GO" id="GO:0005769">
    <property type="term" value="C:early endosome"/>
    <property type="evidence" value="ECO:0007669"/>
    <property type="project" value="UniProtKB-SubCell"/>
</dbReference>
<dbReference type="GO" id="GO:0005768">
    <property type="term" value="C:endosome"/>
    <property type="evidence" value="ECO:0000318"/>
    <property type="project" value="GO_Central"/>
</dbReference>
<dbReference type="GO" id="GO:0071203">
    <property type="term" value="C:WASH complex"/>
    <property type="evidence" value="ECO:0000250"/>
    <property type="project" value="UniProtKB"/>
</dbReference>
<dbReference type="GO" id="GO:0030041">
    <property type="term" value="P:actin filament polymerization"/>
    <property type="evidence" value="ECO:0000318"/>
    <property type="project" value="GO_Central"/>
</dbReference>
<dbReference type="GO" id="GO:0007409">
    <property type="term" value="P:axonogenesis"/>
    <property type="evidence" value="ECO:0000315"/>
    <property type="project" value="ZFIN"/>
</dbReference>
<dbReference type="GO" id="GO:0048738">
    <property type="term" value="P:cardiac muscle tissue development"/>
    <property type="evidence" value="ECO:0000315"/>
    <property type="project" value="ZFIN"/>
</dbReference>
<dbReference type="GO" id="GO:0140285">
    <property type="term" value="P:endosome fission"/>
    <property type="evidence" value="ECO:0000318"/>
    <property type="project" value="GO_Central"/>
</dbReference>
<dbReference type="GO" id="GO:0007032">
    <property type="term" value="P:endosome organization"/>
    <property type="evidence" value="ECO:0000318"/>
    <property type="project" value="GO_Central"/>
</dbReference>
<dbReference type="GO" id="GO:0060047">
    <property type="term" value="P:heart contraction"/>
    <property type="evidence" value="ECO:0000315"/>
    <property type="project" value="ZFIN"/>
</dbReference>
<dbReference type="GO" id="GO:0048666">
    <property type="term" value="P:neuron development"/>
    <property type="evidence" value="ECO:0000315"/>
    <property type="project" value="ZFIN"/>
</dbReference>
<dbReference type="GO" id="GO:0015031">
    <property type="term" value="P:protein transport"/>
    <property type="evidence" value="ECO:0007669"/>
    <property type="project" value="UniProtKB-KW"/>
</dbReference>
<dbReference type="GO" id="GO:0051125">
    <property type="term" value="P:regulation of actin nucleation"/>
    <property type="evidence" value="ECO:0000318"/>
    <property type="project" value="GO_Central"/>
</dbReference>
<dbReference type="GO" id="GO:1905304">
    <property type="term" value="P:regulation of cardiac myofibril assembly"/>
    <property type="evidence" value="ECO:0000315"/>
    <property type="project" value="ZFIN"/>
</dbReference>
<dbReference type="InterPro" id="IPR019393">
    <property type="entry name" value="WASH_strumpellin"/>
</dbReference>
<dbReference type="PANTHER" id="PTHR15691">
    <property type="entry name" value="WASH COMPLEX SUBUNIT 5"/>
    <property type="match status" value="1"/>
</dbReference>
<dbReference type="PANTHER" id="PTHR15691:SF6">
    <property type="entry name" value="WASH COMPLEX SUBUNIT 5"/>
    <property type="match status" value="1"/>
</dbReference>
<dbReference type="Pfam" id="PF10266">
    <property type="entry name" value="Strumpellin"/>
    <property type="match status" value="1"/>
</dbReference>
<organism>
    <name type="scientific">Danio rerio</name>
    <name type="common">Zebrafish</name>
    <name type="synonym">Brachydanio rerio</name>
    <dbReference type="NCBI Taxonomy" id="7955"/>
    <lineage>
        <taxon>Eukaryota</taxon>
        <taxon>Metazoa</taxon>
        <taxon>Chordata</taxon>
        <taxon>Craniata</taxon>
        <taxon>Vertebrata</taxon>
        <taxon>Euteleostomi</taxon>
        <taxon>Actinopterygii</taxon>
        <taxon>Neopterygii</taxon>
        <taxon>Teleostei</taxon>
        <taxon>Ostariophysi</taxon>
        <taxon>Cypriniformes</taxon>
        <taxon>Danionidae</taxon>
        <taxon>Danioninae</taxon>
        <taxon>Danio</taxon>
    </lineage>
</organism>
<protein>
    <recommendedName>
        <fullName evidence="1">WASH complex subunit 5</fullName>
    </recommendedName>
    <alternativeName>
        <fullName evidence="4">WASH complex subunit strumpellin</fullName>
    </alternativeName>
</protein>
<feature type="chain" id="PRO_0000318931" description="WASH complex subunit 5">
    <location>
        <begin position="1"/>
        <end position="1159"/>
    </location>
</feature>
<sequence>MVDFLAENNLCGQAILRIVSRGNAIIAELLRLSDFIPAVFRLRDKTDQQKYGDIICDFSYFKGPEYYEGKLEAKPELQDLDEEFRENNIEILTRFYLAFESVHKYVVDLIRCLDDLNEGVYIQQTLETVLLNEDGKQLLCEALYLYGVMLLVIDQKMEGEVRERMLVSYYRYSAARSSADSNLDDICKLLRSTGYSSHPGAKRPTNYPESYFQRVPISSTFISMVIGRLRSDDIYNQVSAYPLPEHRSTALATQAAMLYVCLYFTPSILHTQQAKMREIVDKYFPDNWVISIYMGITVNLVEAWEPYKAAKIALNYTLDTANIREQAGRYAASVETLRPQVQQLLKEGFLREEIILDNIPKLLNCLRDCNVAIRWLMLHTAESAYDPNNKRLRQIKDQVINDSKYNPKILFQLLLDTAQFEFILKEMFKQMLAEKQLKWESYKKEGSERMMELAEVFSGVKPLTRVEKNENLQAWFREISKQIESLNYEDSTAAGRKTVQLIQALVEVQEFHQLESNLQVCQFLADTRKFLHQMIRTINIKEEVLITMQIVGDLSYAWQIIDSFTAIMQESIRANPSMVTKLRATLLKLASALDLPLLRINQVNSPDLLSVSQFYSGELVAYVRKVLQIIPESMFTSLAKIIKLQIHDIMEVPTRLDKDKLKDYSQLSARYEVAKLTHAISVFTEGILMMKTTLVGIIQVDPKQLLEDGIRKELVKRVAYALHKGLIFNPKAKPSELMPKLKEMAATMDGFYRSFEYIQDYVSIYGLKIWQEEVSRIINYNVEQECNSFLRTKIQDWQSVHQSTHIPIPKYPSVDESATFIGRLCREILRITDPKVTCYIDQLNTWYDLRTHQEVTNNRLFSEIQDTLGTFGLNGLDRLLCFMIVKELQNFLTVLQKSILKDKAVVDVFKALLTAVNPVKGIVANASKVYTNAAAKTQKIWSPYLESIMKVGQMQILRQQIANELNYSCKFDSKHLAAALDNLNKSLLSDIEAHYQDPSLPYPKEDNTLLYEITAYLEAAGIHNPLNKIYITTKRLPYFPIVNFLFLIAQLPKLQYNKSQGMACRKPADALDWAPLVLGLLTLLKQFHSRYTEQFLALIGQFIRSIMEQCTSQKIPDMPSDVVGALMFLEDYVRYTKLPRKVAEAHVPSFIFDEFRTVL</sequence>
<proteinExistence type="evidence at transcript level"/>
<gene>
    <name evidence="1" type="primary">washc5</name>
    <name type="ORF">zgc:55908</name>
</gene>
<keyword id="KW-0967">Endosome</keyword>
<keyword id="KW-0653">Protein transport</keyword>
<keyword id="KW-1185">Reference proteome</keyword>
<keyword id="KW-0813">Transport</keyword>
<reference key="1">
    <citation type="submission" date="2003-01" db="EMBL/GenBank/DDBJ databases">
        <authorList>
            <consortium name="NIH - Zebrafish Gene Collection (ZGC) project"/>
        </authorList>
    </citation>
    <scope>NUCLEOTIDE SEQUENCE [LARGE SCALE MRNA]</scope>
    <source>
        <strain>AB</strain>
    </source>
</reference>
<reference key="2">
    <citation type="journal article" date="2013" name="J. Med. Genet.">
        <title>A novel mutation in KIAA0196: identification of a gene involved in Ritscher-Schinzel/3C syndrome in a First Nations cohort.</title>
        <authorList>
            <person name="Elliott A.M."/>
            <person name="Simard L.R."/>
            <person name="Coghlan G."/>
            <person name="Chudley A.E."/>
            <person name="Chodirker B.N."/>
            <person name="Greenberg C.R."/>
            <person name="Burch T."/>
            <person name="Ly V."/>
            <person name="Hatch G.M."/>
            <person name="Zelinski T."/>
        </authorList>
    </citation>
    <scope>DISRUPTION PHENOTYPE</scope>
</reference>
<name>WASC5_DANRE</name>
<accession>Q7ZVM1</accession>
<evidence type="ECO:0000250" key="1">
    <source>
        <dbReference type="UniProtKB" id="Q12768"/>
    </source>
</evidence>
<evidence type="ECO:0000250" key="2">
    <source>
        <dbReference type="UniProtKB" id="Q6DIP9"/>
    </source>
</evidence>
<evidence type="ECO:0000269" key="3">
    <source>
    </source>
</evidence>
<evidence type="ECO:0000305" key="4"/>
<comment type="function">
    <text evidence="2">Acts at least in part as component of the WASH complex which seems to regulate washc1 nucleation-promoting factor (NPF) activity and is required for its membrane targeting during endosomal sorting.</text>
</comment>
<comment type="subunit">
    <text evidence="1">Component of the WASH complex.</text>
</comment>
<comment type="subcellular location">
    <subcellularLocation>
        <location evidence="4">Early endosome</location>
    </subcellularLocation>
</comment>
<comment type="disruption phenotype">
    <text evidence="3">Morpholino knockdown of the protein induces cardiac contractile dysfunction and loss of motoneuron formation.</text>
</comment>
<comment type="similarity">
    <text evidence="4">Belongs to the strumpellin family.</text>
</comment>